<name>A1OA1_LOXVA</name>
<organism>
    <name type="scientific">Loxosceles variegata</name>
    <name type="common">Recluse spider</name>
    <dbReference type="NCBI Taxonomy" id="571533"/>
    <lineage>
        <taxon>Eukaryota</taxon>
        <taxon>Metazoa</taxon>
        <taxon>Ecdysozoa</taxon>
        <taxon>Arthropoda</taxon>
        <taxon>Chelicerata</taxon>
        <taxon>Arachnida</taxon>
        <taxon>Araneae</taxon>
        <taxon>Araneomorphae</taxon>
        <taxon>Haplogynae</taxon>
        <taxon>Scytodoidea</taxon>
        <taxon>Sicariidae</taxon>
        <taxon>Loxosceles</taxon>
    </lineage>
</organism>
<reference key="1">
    <citation type="journal article" date="2009" name="Mol. Biol. Evol.">
        <title>Molecular evolution, functional variation, and proposed nomenclature of the gene family that includes sphingomyelinase D in sicariid spider venoms.</title>
        <authorList>
            <person name="Binford G.J."/>
            <person name="Bodner M.R."/>
            <person name="Cordes M.H."/>
            <person name="Baldwin K.L."/>
            <person name="Rynerson M.R."/>
            <person name="Burns S.N."/>
            <person name="Zobel-Thropp P.A."/>
        </authorList>
    </citation>
    <scope>NUCLEOTIDE SEQUENCE [MRNA]</scope>
    <scope>NOMENCLATURE</scope>
    <source>
        <tissue>Venom gland</tissue>
    </source>
</reference>
<protein>
    <recommendedName>
        <fullName evidence="6">Dermonecrotic toxin LvSicTox-alphaIC1ai</fullName>
        <ecNumber evidence="4">4.6.1.-</ecNumber>
    </recommendedName>
    <alternativeName>
        <fullName>Phospholipase D</fullName>
        <shortName>PLD</shortName>
    </alternativeName>
    <alternativeName>
        <fullName>Sphingomyelin phosphodiesterase D</fullName>
        <shortName>SMD</shortName>
        <shortName>SMase D</shortName>
        <shortName>Sphingomyelinase D</shortName>
    </alternativeName>
</protein>
<feature type="chain" id="PRO_0000392806" description="Dermonecrotic toxin LvSicTox-alphaIC1ai">
    <location>
        <begin position="1" status="less than"/>
        <end position="273"/>
    </location>
</feature>
<feature type="active site" evidence="5">
    <location>
        <position position="5"/>
    </location>
</feature>
<feature type="active site" description="Nucleophile" evidence="5">
    <location>
        <position position="41"/>
    </location>
</feature>
<feature type="binding site" evidence="5">
    <location>
        <position position="25"/>
    </location>
    <ligand>
        <name>Mg(2+)</name>
        <dbReference type="ChEBI" id="CHEBI:18420"/>
    </ligand>
</feature>
<feature type="binding site" evidence="5">
    <location>
        <position position="27"/>
    </location>
    <ligand>
        <name>Mg(2+)</name>
        <dbReference type="ChEBI" id="CHEBI:18420"/>
    </ligand>
</feature>
<feature type="binding site" evidence="5">
    <location>
        <position position="85"/>
    </location>
    <ligand>
        <name>Mg(2+)</name>
        <dbReference type="ChEBI" id="CHEBI:18420"/>
    </ligand>
</feature>
<feature type="disulfide bond" evidence="3">
    <location>
        <begin position="45"/>
        <end position="51"/>
    </location>
</feature>
<feature type="disulfide bond" evidence="3">
    <location>
        <begin position="47"/>
        <end position="190"/>
    </location>
</feature>
<feature type="non-terminal residue">
    <location>
        <position position="1"/>
    </location>
</feature>
<evidence type="ECO:0000250" key="1">
    <source>
        <dbReference type="UniProtKB" id="A0A0D4WTV1"/>
    </source>
</evidence>
<evidence type="ECO:0000250" key="2">
    <source>
        <dbReference type="UniProtKB" id="A0A0D4WV12"/>
    </source>
</evidence>
<evidence type="ECO:0000250" key="3">
    <source>
        <dbReference type="UniProtKB" id="P0CE80"/>
    </source>
</evidence>
<evidence type="ECO:0000250" key="4">
    <source>
        <dbReference type="UniProtKB" id="Q4ZFU2"/>
    </source>
</evidence>
<evidence type="ECO:0000250" key="5">
    <source>
        <dbReference type="UniProtKB" id="Q8I914"/>
    </source>
</evidence>
<evidence type="ECO:0000303" key="6">
    <source>
    </source>
</evidence>
<evidence type="ECO:0000305" key="7"/>
<evidence type="ECO:0000305" key="8">
    <source>
    </source>
</evidence>
<sequence>WIMGHMVNSLAQMDEFVGLGSNSIETDVSFDKQANPEYTYHGVPCDCGRSCGHSTKFNDFLKGLRKATTPGDSKYHEKLILVVFDLKTGSLYDNQAYDAGTKLAKNLLQHYWNNGNNGGRAYIILSIPKLNHYKLITGFKETLKNEGHEDLLEKVGHDFSGNDDISEVQKTYNKAGVTGHVWQSDGITNCLLRGLSRVKAAVANRDSGRGIINKVYYWTVDKRSTTRDSLDAKVDGIMTNYPDITVEILNEDAYKTKFRIATYEDNPWETFKE</sequence>
<comment type="function">
    <text evidence="1 3">Dermonecrotic toxins cleave the phosphodiester linkage between the phosphate and headgroup of certain phospholipids (sphingolipid and lysolipid substrates), forming an alcohol (often choline) and a cyclic phosphate (By similarity). This toxin acts on sphingomyelin (SM) (By similarity). It may also act on ceramide phosphoethanolamine (CPE), lysophosphatidylcholine (LPC) and lysophosphatidylethanolamine (LPE), but not on lysophosphatidylserine (LPS), and lysophosphatidylglycerol (LPG) (By similarity). It acts by transphosphatidylation, releasing exclusively cyclic phosphate products as second products (By similarity). Induces dermonecrosis, hemolysis, increased vascular permeability, edema, inflammatory response, and platelet aggregation (By similarity).</text>
</comment>
<comment type="catalytic activity">
    <reaction evidence="1">
        <text>an N-(acyl)-sphingosylphosphocholine = an N-(acyl)-sphingosyl-1,3-cyclic phosphate + choline</text>
        <dbReference type="Rhea" id="RHEA:60652"/>
        <dbReference type="ChEBI" id="CHEBI:15354"/>
        <dbReference type="ChEBI" id="CHEBI:64583"/>
        <dbReference type="ChEBI" id="CHEBI:143892"/>
    </reaction>
</comment>
<comment type="catalytic activity">
    <reaction evidence="1">
        <text>an N-(acyl)-sphingosylphosphoethanolamine = an N-(acyl)-sphingosyl-1,3-cyclic phosphate + ethanolamine</text>
        <dbReference type="Rhea" id="RHEA:60648"/>
        <dbReference type="ChEBI" id="CHEBI:57603"/>
        <dbReference type="ChEBI" id="CHEBI:143891"/>
        <dbReference type="ChEBI" id="CHEBI:143892"/>
    </reaction>
</comment>
<comment type="catalytic activity">
    <reaction evidence="1">
        <text>a 1-acyl-sn-glycero-3-phosphocholine = a 1-acyl-sn-glycero-2,3-cyclic phosphate + choline</text>
        <dbReference type="Rhea" id="RHEA:60700"/>
        <dbReference type="ChEBI" id="CHEBI:15354"/>
        <dbReference type="ChEBI" id="CHEBI:58168"/>
        <dbReference type="ChEBI" id="CHEBI:143947"/>
    </reaction>
</comment>
<comment type="catalytic activity">
    <reaction evidence="1">
        <text>a 1-acyl-sn-glycero-3-phosphoethanolamine = a 1-acyl-sn-glycero-2,3-cyclic phosphate + ethanolamine</text>
        <dbReference type="Rhea" id="RHEA:60704"/>
        <dbReference type="ChEBI" id="CHEBI:57603"/>
        <dbReference type="ChEBI" id="CHEBI:64381"/>
        <dbReference type="ChEBI" id="CHEBI:143947"/>
    </reaction>
</comment>
<comment type="cofactor">
    <cofactor evidence="5">
        <name>Mg(2+)</name>
        <dbReference type="ChEBI" id="CHEBI:18420"/>
    </cofactor>
    <text evidence="5">Binds 1 Mg(2+) ion per subunit.</text>
</comment>
<comment type="subcellular location">
    <subcellularLocation>
        <location evidence="8">Secreted</location>
    </subcellularLocation>
</comment>
<comment type="tissue specificity">
    <text evidence="8">Expressed by the venom gland.</text>
</comment>
<comment type="similarity">
    <text evidence="7">Belongs to the arthropod phospholipase D family. Class II subfamily.</text>
</comment>
<comment type="caution">
    <text evidence="1 2 4">The most common activity assay for dermonecrotic toxins detects enzymatic activity by monitoring choline release from substrate. Liberation of choline from sphingomyelin (SM) or lysophosphatidylcholine (LPC) is commonly assumed to result from substrate hydrolysis, giving either ceramide-1-phosphate (C1P) or lysophosphatidic acid (LPA), respectively, as a second product. However, two studies from Lajoie and colleagues (2013 and 2015) report the observation of exclusive formation of cyclic phosphate products as second products, resulting from intramolecular transphosphatidylation. Cyclic phosphates have vastly different biological properties from their monoester counterparts, and they may be relevant to the pathology of brown spider envenomation.</text>
</comment>
<accession>C0JAZ1</accession>
<keyword id="KW-0204">Cytolysis</keyword>
<keyword id="KW-1061">Dermonecrotic toxin</keyword>
<keyword id="KW-1015">Disulfide bond</keyword>
<keyword id="KW-0354">Hemolysis</keyword>
<keyword id="KW-0442">Lipid degradation</keyword>
<keyword id="KW-0443">Lipid metabolism</keyword>
<keyword id="KW-0456">Lyase</keyword>
<keyword id="KW-0460">Magnesium</keyword>
<keyword id="KW-0479">Metal-binding</keyword>
<keyword id="KW-0964">Secreted</keyword>
<keyword id="KW-0800">Toxin</keyword>
<dbReference type="EC" id="4.6.1.-" evidence="4"/>
<dbReference type="EMBL" id="FJ171426">
    <property type="protein sequence ID" value="ACN48922.1"/>
    <property type="molecule type" value="mRNA"/>
</dbReference>
<dbReference type="SMR" id="C0JAZ1"/>
<dbReference type="GO" id="GO:0005576">
    <property type="term" value="C:extracellular region"/>
    <property type="evidence" value="ECO:0007669"/>
    <property type="project" value="UniProtKB-SubCell"/>
</dbReference>
<dbReference type="GO" id="GO:0016829">
    <property type="term" value="F:lyase activity"/>
    <property type="evidence" value="ECO:0007669"/>
    <property type="project" value="UniProtKB-KW"/>
</dbReference>
<dbReference type="GO" id="GO:0046872">
    <property type="term" value="F:metal ion binding"/>
    <property type="evidence" value="ECO:0007669"/>
    <property type="project" value="UniProtKB-KW"/>
</dbReference>
<dbReference type="GO" id="GO:0008081">
    <property type="term" value="F:phosphoric diester hydrolase activity"/>
    <property type="evidence" value="ECO:0007669"/>
    <property type="project" value="InterPro"/>
</dbReference>
<dbReference type="GO" id="GO:0090729">
    <property type="term" value="F:toxin activity"/>
    <property type="evidence" value="ECO:0007669"/>
    <property type="project" value="UniProtKB-KW"/>
</dbReference>
<dbReference type="GO" id="GO:0031640">
    <property type="term" value="P:killing of cells of another organism"/>
    <property type="evidence" value="ECO:0007669"/>
    <property type="project" value="UniProtKB-KW"/>
</dbReference>
<dbReference type="GO" id="GO:0016042">
    <property type="term" value="P:lipid catabolic process"/>
    <property type="evidence" value="ECO:0007669"/>
    <property type="project" value="UniProtKB-KW"/>
</dbReference>
<dbReference type="CDD" id="cd08576">
    <property type="entry name" value="GDPD_like_SMaseD_PLD"/>
    <property type="match status" value="1"/>
</dbReference>
<dbReference type="Gene3D" id="3.20.20.190">
    <property type="entry name" value="Phosphatidylinositol (PI) phosphodiesterase"/>
    <property type="match status" value="1"/>
</dbReference>
<dbReference type="InterPro" id="IPR017946">
    <property type="entry name" value="PLC-like_Pdiesterase_TIM-brl"/>
</dbReference>
<dbReference type="Pfam" id="PF13653">
    <property type="entry name" value="GDPD_2"/>
    <property type="match status" value="1"/>
</dbReference>
<dbReference type="SUPFAM" id="SSF51695">
    <property type="entry name" value="PLC-like phosphodiesterases"/>
    <property type="match status" value="1"/>
</dbReference>
<proteinExistence type="evidence at transcript level"/>